<protein>
    <recommendedName>
        <fullName>Glial fibrillary acidic protein</fullName>
        <shortName>GFAP</shortName>
    </recommendedName>
</protein>
<comment type="function">
    <text evidence="1">GFAP, a class-III intermediate filament, is a cell-specific marker that, during the development of the central nervous system, distinguishes astrocytes from other glial cells.</text>
</comment>
<comment type="subunit">
    <text evidence="2">Interacts with SYNM.</text>
</comment>
<comment type="subcellular location">
    <subcellularLocation>
        <location evidence="3">Cytoplasm</location>
    </subcellularLocation>
    <text evidence="3">Associated with intermediate filaments.</text>
</comment>
<comment type="PTM">
    <text evidence="3">Phosphorylated by PKN1.</text>
</comment>
<comment type="similarity">
    <text evidence="5">Belongs to the intermediate filament family.</text>
</comment>
<accession>Q5RA72</accession>
<dbReference type="EMBL" id="CR859147">
    <property type="protein sequence ID" value="CAH91338.1"/>
    <property type="molecule type" value="mRNA"/>
</dbReference>
<dbReference type="RefSeq" id="NP_001125791.1">
    <property type="nucleotide sequence ID" value="NM_001132319.1"/>
</dbReference>
<dbReference type="SMR" id="Q5RA72"/>
<dbReference type="FunCoup" id="Q5RA72">
    <property type="interactions" value="630"/>
</dbReference>
<dbReference type="STRING" id="9601.ENSPPYP00000009349"/>
<dbReference type="Ensembl" id="ENSPPYT00000038650.1">
    <property type="protein sequence ID" value="ENSPPYP00000033918.1"/>
    <property type="gene ID" value="ENSPPYG00000008318.3"/>
</dbReference>
<dbReference type="GeneID" id="100172719"/>
<dbReference type="KEGG" id="pon:100172719"/>
<dbReference type="CTD" id="2670"/>
<dbReference type="eggNOG" id="ENOG502RKU6">
    <property type="taxonomic scope" value="Eukaryota"/>
</dbReference>
<dbReference type="GeneTree" id="ENSGT00940000159539"/>
<dbReference type="InParanoid" id="Q5RA72"/>
<dbReference type="OrthoDB" id="2441647at2759"/>
<dbReference type="Proteomes" id="UP000001595">
    <property type="component" value="Chromosome 17"/>
</dbReference>
<dbReference type="GO" id="GO:0042995">
    <property type="term" value="C:cell projection"/>
    <property type="evidence" value="ECO:0007669"/>
    <property type="project" value="TreeGrafter"/>
</dbReference>
<dbReference type="GO" id="GO:0005737">
    <property type="term" value="C:cytoplasm"/>
    <property type="evidence" value="ECO:0007669"/>
    <property type="project" value="UniProtKB-SubCell"/>
</dbReference>
<dbReference type="GO" id="GO:0005882">
    <property type="term" value="C:intermediate filament"/>
    <property type="evidence" value="ECO:0007669"/>
    <property type="project" value="UniProtKB-KW"/>
</dbReference>
<dbReference type="GO" id="GO:0005200">
    <property type="term" value="F:structural constituent of cytoskeleton"/>
    <property type="evidence" value="ECO:0007669"/>
    <property type="project" value="TreeGrafter"/>
</dbReference>
<dbReference type="GO" id="GO:0045109">
    <property type="term" value="P:intermediate filament organization"/>
    <property type="evidence" value="ECO:0000250"/>
    <property type="project" value="UniProtKB"/>
</dbReference>
<dbReference type="GO" id="GO:1904714">
    <property type="term" value="P:regulation of chaperone-mediated autophagy"/>
    <property type="evidence" value="ECO:0007669"/>
    <property type="project" value="TreeGrafter"/>
</dbReference>
<dbReference type="FunFam" id="1.20.5.1160:FF:000001">
    <property type="entry name" value="Keratin type II"/>
    <property type="match status" value="1"/>
</dbReference>
<dbReference type="FunFam" id="1.20.5.170:FF:000002">
    <property type="entry name" value="Type I keratin KA11"/>
    <property type="match status" value="1"/>
</dbReference>
<dbReference type="FunFam" id="1.20.5.500:FF:000001">
    <property type="entry name" value="Type II keratin 23"/>
    <property type="match status" value="1"/>
</dbReference>
<dbReference type="Gene3D" id="1.20.5.170">
    <property type="match status" value="1"/>
</dbReference>
<dbReference type="Gene3D" id="1.20.5.500">
    <property type="entry name" value="Single helix bin"/>
    <property type="match status" value="1"/>
</dbReference>
<dbReference type="Gene3D" id="1.20.5.1160">
    <property type="entry name" value="Vasodilator-stimulated phosphoprotein"/>
    <property type="match status" value="1"/>
</dbReference>
<dbReference type="InterPro" id="IPR018039">
    <property type="entry name" value="IF_conserved"/>
</dbReference>
<dbReference type="InterPro" id="IPR039008">
    <property type="entry name" value="IF_rod_dom"/>
</dbReference>
<dbReference type="InterPro" id="IPR006821">
    <property type="entry name" value="Intermed_filament_DNA-bd"/>
</dbReference>
<dbReference type="InterPro" id="IPR050405">
    <property type="entry name" value="Intermediate_filament"/>
</dbReference>
<dbReference type="PANTHER" id="PTHR45652">
    <property type="entry name" value="GLIAL FIBRILLARY ACIDIC PROTEIN"/>
    <property type="match status" value="1"/>
</dbReference>
<dbReference type="PANTHER" id="PTHR45652:SF9">
    <property type="entry name" value="GLIAL FIBRILLARY ACIDIC PROTEIN"/>
    <property type="match status" value="1"/>
</dbReference>
<dbReference type="Pfam" id="PF00038">
    <property type="entry name" value="Filament"/>
    <property type="match status" value="1"/>
</dbReference>
<dbReference type="Pfam" id="PF04732">
    <property type="entry name" value="Filament_head"/>
    <property type="match status" value="1"/>
</dbReference>
<dbReference type="SMART" id="SM01391">
    <property type="entry name" value="Filament"/>
    <property type="match status" value="1"/>
</dbReference>
<dbReference type="SUPFAM" id="SSF64593">
    <property type="entry name" value="Intermediate filament protein, coiled coil region"/>
    <property type="match status" value="2"/>
</dbReference>
<dbReference type="PROSITE" id="PS00226">
    <property type="entry name" value="IF_ROD_1"/>
    <property type="match status" value="1"/>
</dbReference>
<dbReference type="PROSITE" id="PS51842">
    <property type="entry name" value="IF_ROD_2"/>
    <property type="match status" value="1"/>
</dbReference>
<organism>
    <name type="scientific">Pongo abelii</name>
    <name type="common">Sumatran orangutan</name>
    <name type="synonym">Pongo pygmaeus abelii</name>
    <dbReference type="NCBI Taxonomy" id="9601"/>
    <lineage>
        <taxon>Eukaryota</taxon>
        <taxon>Metazoa</taxon>
        <taxon>Chordata</taxon>
        <taxon>Craniata</taxon>
        <taxon>Vertebrata</taxon>
        <taxon>Euteleostomi</taxon>
        <taxon>Mammalia</taxon>
        <taxon>Eutheria</taxon>
        <taxon>Euarchontoglires</taxon>
        <taxon>Primates</taxon>
        <taxon>Haplorrhini</taxon>
        <taxon>Catarrhini</taxon>
        <taxon>Hominidae</taxon>
        <taxon>Pongo</taxon>
    </lineage>
</organism>
<evidence type="ECO:0000250" key="1"/>
<evidence type="ECO:0000250" key="2">
    <source>
        <dbReference type="UniProtKB" id="P03995"/>
    </source>
</evidence>
<evidence type="ECO:0000250" key="3">
    <source>
        <dbReference type="UniProtKB" id="P14136"/>
    </source>
</evidence>
<evidence type="ECO:0000250" key="4">
    <source>
        <dbReference type="UniProtKB" id="P47819"/>
    </source>
</evidence>
<evidence type="ECO:0000255" key="5">
    <source>
        <dbReference type="PROSITE-ProRule" id="PRU01188"/>
    </source>
</evidence>
<gene>
    <name type="primary">GFAP</name>
</gene>
<reference key="1">
    <citation type="submission" date="2004-11" db="EMBL/GenBank/DDBJ databases">
        <authorList>
            <consortium name="The German cDNA consortium"/>
        </authorList>
    </citation>
    <scope>NUCLEOTIDE SEQUENCE [LARGE SCALE MRNA]</scope>
    <source>
        <tissue>Brain cortex</tissue>
    </source>
</reference>
<name>GFAP_PONAB</name>
<sequence length="432" mass="49872">MERRRITSAARRSYISSGEMMVGGLAPGRRLGPGTRLSLARMPPPLPTRVDFSLAGALNAGFKETRASERAEMMELNDRFASYIEKVRFLEQQNKALAAELNQLRAKEPTKLADVYQAELRELRLRLDQLTANSARLEVERDNLAQDLGTVRQKLQDETNLRLEAENNLAAYRQEADEATLARLDLERKTESLEEEIRFLRKIHEEEVRELQEQLARQQVHVELDMAKPDLTAALKEIRTQYEAMASSNMHEAEEWYRSKFADLTDAAARNAELLRQAKHEANDYRRQLQSLTCDLESLRGTNESLERQMREQEERHAREAASYQEALARLEEEGQSLKDEMARHLQEYQDLLNVKLALDIEIATYRKLLEGEENRITIPVQTFSNLQIRETSLDTKSVSEGHLKRNIVVKTVEMRDGEVIKESKQEHKDVM</sequence>
<feature type="chain" id="PRO_0000318190" description="Glial fibrillary acidic protein">
    <location>
        <begin position="1"/>
        <end position="432"/>
    </location>
</feature>
<feature type="domain" description="IF rod" evidence="5">
    <location>
        <begin position="69"/>
        <end position="377"/>
    </location>
</feature>
<feature type="region of interest" description="Head">
    <location>
        <begin position="1"/>
        <end position="72"/>
    </location>
</feature>
<feature type="region of interest" description="Coil 1A">
    <location>
        <begin position="73"/>
        <end position="104"/>
    </location>
</feature>
<feature type="region of interest" description="Linker 1">
    <location>
        <begin position="105"/>
        <end position="115"/>
    </location>
</feature>
<feature type="region of interest" description="Coil 1B">
    <location>
        <begin position="116"/>
        <end position="214"/>
    </location>
</feature>
<feature type="region of interest" description="Linker 12">
    <location>
        <begin position="215"/>
        <end position="230"/>
    </location>
</feature>
<feature type="region of interest" description="Coil 2A">
    <location>
        <begin position="231"/>
        <end position="252"/>
    </location>
</feature>
<feature type="region of interest" description="Linker 2">
    <location>
        <begin position="253"/>
        <end position="256"/>
    </location>
</feature>
<feature type="region of interest" description="Coil 2B">
    <location>
        <begin position="257"/>
        <end position="377"/>
    </location>
</feature>
<feature type="region of interest" description="Tail">
    <location>
        <begin position="378"/>
        <end position="432"/>
    </location>
</feature>
<feature type="modified residue" description="Phosphothreonine; by AURKB and ROCK1" evidence="3">
    <location>
        <position position="7"/>
    </location>
</feature>
<feature type="modified residue" description="Omega-N-methylarginine" evidence="2">
    <location>
        <position position="12"/>
    </location>
</feature>
<feature type="modified residue" description="Phosphoserine; by AURKB and ROCK1" evidence="3">
    <location>
        <position position="13"/>
    </location>
</feature>
<feature type="modified residue" description="Citrulline" evidence="1">
    <location>
        <position position="30"/>
    </location>
</feature>
<feature type="modified residue" description="Citrulline" evidence="1">
    <location>
        <position position="36"/>
    </location>
</feature>
<feature type="modified residue" description="Phosphoserine; by AURKB and ROCK1" evidence="3">
    <location>
        <position position="38"/>
    </location>
</feature>
<feature type="modified residue" description="Phosphoserine" evidence="4">
    <location>
        <position position="82"/>
    </location>
</feature>
<feature type="modified residue" description="Phosphothreonine" evidence="4">
    <location>
        <position position="110"/>
    </location>
</feature>
<feature type="modified residue" description="Phosphothreonine" evidence="4">
    <location>
        <position position="150"/>
    </location>
</feature>
<feature type="modified residue" description="Citrulline" evidence="1">
    <location>
        <position position="270"/>
    </location>
</feature>
<feature type="modified residue" description="Phosphoserine" evidence="4">
    <location>
        <position position="323"/>
    </location>
</feature>
<feature type="modified residue" description="Phosphothreonine" evidence="4">
    <location>
        <position position="383"/>
    </location>
</feature>
<feature type="modified residue" description="Phosphoserine" evidence="4">
    <location>
        <position position="385"/>
    </location>
</feature>
<feature type="modified residue" description="Citrulline" evidence="1">
    <location>
        <position position="406"/>
    </location>
</feature>
<feature type="modified residue" description="Citrulline" evidence="1">
    <location>
        <position position="416"/>
    </location>
</feature>
<keyword id="KW-0164">Citrullination</keyword>
<keyword id="KW-0175">Coiled coil</keyword>
<keyword id="KW-0963">Cytoplasm</keyword>
<keyword id="KW-0403">Intermediate filament</keyword>
<keyword id="KW-0488">Methylation</keyword>
<keyword id="KW-0597">Phosphoprotein</keyword>
<keyword id="KW-1185">Reference proteome</keyword>
<proteinExistence type="evidence at transcript level"/>